<accession>B8DRD6</accession>
<protein>
    <recommendedName>
        <fullName evidence="1">Chaperone protein DnaK</fullName>
    </recommendedName>
    <alternativeName>
        <fullName evidence="1">HSP70</fullName>
    </alternativeName>
    <alternativeName>
        <fullName evidence="1">Heat shock 70 kDa protein</fullName>
    </alternativeName>
    <alternativeName>
        <fullName evidence="1">Heat shock protein 70</fullName>
    </alternativeName>
</protein>
<evidence type="ECO:0000255" key="1">
    <source>
        <dbReference type="HAMAP-Rule" id="MF_00332"/>
    </source>
</evidence>
<evidence type="ECO:0000256" key="2">
    <source>
        <dbReference type="SAM" id="MobiDB-lite"/>
    </source>
</evidence>
<organism>
    <name type="scientific">Nitratidesulfovibrio vulgaris (strain DSM 19637 / Miyazaki F)</name>
    <name type="common">Desulfovibrio vulgaris</name>
    <dbReference type="NCBI Taxonomy" id="883"/>
    <lineage>
        <taxon>Bacteria</taxon>
        <taxon>Pseudomonadati</taxon>
        <taxon>Thermodesulfobacteriota</taxon>
        <taxon>Desulfovibrionia</taxon>
        <taxon>Desulfovibrionales</taxon>
        <taxon>Desulfovibrionaceae</taxon>
        <taxon>Nitratidesulfovibrio</taxon>
    </lineage>
</organism>
<gene>
    <name evidence="1" type="primary">dnaK</name>
    <name type="ordered locus">DvMF_2835</name>
</gene>
<name>DNAK_NITV9</name>
<sequence length="639" mass="68656">MGKIIGIDLGTTNSCVYVMEGKDPKCITNPEGGRTTPSIVAFTDKERLVGDIAKRQAVTNPERTVFAVKRLMGRKGDAPEVNNWKTHSPYRIVAGANGDAAVEVQGRQYSAAEVSAMILGKLKADAEAYLGETVTDAVITVPAYFNDAQRQATKDAGRIAGLDVKRIINEPTAASLAYGFDRKTNEKIAVFDLGGGTFDISILEVGDNVVEVRATNGDTFLGGEDFDQRVINYLVEEFRRENGVDLSKDRMALQRLKEAAEKAKKDLSTSMETEINLPFITADQNGPKHLMMKLSRAKLEKLVEDLVDRTIEPCRKALADAGLSAAQIDEVVLVGGMTRMPLVQKKVGEFFGKEPNRSVNPDEVVAMGAAIQGGILAGDVKDVLLLDVTPLSLGIETLGGVFTRLIDRNTTIPTRKSQTFTTAADNQPSVSIHVLQGERPMAGDNMTLGRFELSGIPPAMRGTPQVEVTFDIDANGIVNVSAKDLGTGKEQSIRITASSGLSESEIQRLIKEAESHADEDKKKQELIEARNQADGLIYGTEKSIADLGDKLDAATKSDIEGKIEALKKVMDGSDLEAIKTASEELSRASHKLAEQLYQQSQQGQPGAGPEAGDAGHAGHAGSAKGDDDVVDADYTEVKK</sequence>
<dbReference type="EMBL" id="CP001197">
    <property type="protein sequence ID" value="ACL09773.1"/>
    <property type="molecule type" value="Genomic_DNA"/>
</dbReference>
<dbReference type="SMR" id="B8DRD6"/>
<dbReference type="STRING" id="883.DvMF_2835"/>
<dbReference type="KEGG" id="dvm:DvMF_2835"/>
<dbReference type="eggNOG" id="COG0443">
    <property type="taxonomic scope" value="Bacteria"/>
</dbReference>
<dbReference type="HOGENOM" id="CLU_005965_2_1_7"/>
<dbReference type="OrthoDB" id="9766019at2"/>
<dbReference type="GO" id="GO:0005524">
    <property type="term" value="F:ATP binding"/>
    <property type="evidence" value="ECO:0007669"/>
    <property type="project" value="UniProtKB-UniRule"/>
</dbReference>
<dbReference type="GO" id="GO:0140662">
    <property type="term" value="F:ATP-dependent protein folding chaperone"/>
    <property type="evidence" value="ECO:0007669"/>
    <property type="project" value="InterPro"/>
</dbReference>
<dbReference type="GO" id="GO:0051082">
    <property type="term" value="F:unfolded protein binding"/>
    <property type="evidence" value="ECO:0007669"/>
    <property type="project" value="InterPro"/>
</dbReference>
<dbReference type="CDD" id="cd10234">
    <property type="entry name" value="ASKHA_NBD_HSP70_DnaK-like"/>
    <property type="match status" value="1"/>
</dbReference>
<dbReference type="FunFam" id="2.60.34.10:FF:000014">
    <property type="entry name" value="Chaperone protein DnaK HSP70"/>
    <property type="match status" value="1"/>
</dbReference>
<dbReference type="FunFam" id="3.30.30.30:FF:000005">
    <property type="entry name" value="Heat shock protein ssb1"/>
    <property type="match status" value="1"/>
</dbReference>
<dbReference type="FunFam" id="1.20.1270.10:FF:000001">
    <property type="entry name" value="Molecular chaperone DnaK"/>
    <property type="match status" value="1"/>
</dbReference>
<dbReference type="FunFam" id="3.30.420.40:FF:000004">
    <property type="entry name" value="Molecular chaperone DnaK"/>
    <property type="match status" value="1"/>
</dbReference>
<dbReference type="FunFam" id="3.90.640.10:FF:000003">
    <property type="entry name" value="Molecular chaperone DnaK"/>
    <property type="match status" value="1"/>
</dbReference>
<dbReference type="Gene3D" id="1.20.1270.10">
    <property type="match status" value="1"/>
</dbReference>
<dbReference type="Gene3D" id="3.30.420.40">
    <property type="match status" value="2"/>
</dbReference>
<dbReference type="Gene3D" id="3.90.640.10">
    <property type="entry name" value="Actin, Chain A, domain 4"/>
    <property type="match status" value="1"/>
</dbReference>
<dbReference type="Gene3D" id="2.60.34.10">
    <property type="entry name" value="Substrate Binding Domain Of DNAk, Chain A, domain 1"/>
    <property type="match status" value="1"/>
</dbReference>
<dbReference type="HAMAP" id="MF_00332">
    <property type="entry name" value="DnaK"/>
    <property type="match status" value="1"/>
</dbReference>
<dbReference type="InterPro" id="IPR043129">
    <property type="entry name" value="ATPase_NBD"/>
</dbReference>
<dbReference type="InterPro" id="IPR012725">
    <property type="entry name" value="Chaperone_DnaK"/>
</dbReference>
<dbReference type="InterPro" id="IPR018181">
    <property type="entry name" value="Heat_shock_70_CS"/>
</dbReference>
<dbReference type="InterPro" id="IPR029048">
    <property type="entry name" value="HSP70_C_sf"/>
</dbReference>
<dbReference type="InterPro" id="IPR029047">
    <property type="entry name" value="HSP70_peptide-bd_sf"/>
</dbReference>
<dbReference type="InterPro" id="IPR013126">
    <property type="entry name" value="Hsp_70_fam"/>
</dbReference>
<dbReference type="NCBIfam" id="NF001413">
    <property type="entry name" value="PRK00290.1"/>
    <property type="match status" value="1"/>
</dbReference>
<dbReference type="NCBIfam" id="NF003520">
    <property type="entry name" value="PRK05183.1"/>
    <property type="match status" value="1"/>
</dbReference>
<dbReference type="NCBIfam" id="TIGR02350">
    <property type="entry name" value="prok_dnaK"/>
    <property type="match status" value="1"/>
</dbReference>
<dbReference type="PANTHER" id="PTHR19375">
    <property type="entry name" value="HEAT SHOCK PROTEIN 70KDA"/>
    <property type="match status" value="1"/>
</dbReference>
<dbReference type="Pfam" id="PF00012">
    <property type="entry name" value="HSP70"/>
    <property type="match status" value="1"/>
</dbReference>
<dbReference type="PRINTS" id="PR00301">
    <property type="entry name" value="HEATSHOCK70"/>
</dbReference>
<dbReference type="SUPFAM" id="SSF53067">
    <property type="entry name" value="Actin-like ATPase domain"/>
    <property type="match status" value="2"/>
</dbReference>
<dbReference type="SUPFAM" id="SSF100934">
    <property type="entry name" value="Heat shock protein 70kD (HSP70), C-terminal subdomain"/>
    <property type="match status" value="1"/>
</dbReference>
<dbReference type="SUPFAM" id="SSF100920">
    <property type="entry name" value="Heat shock protein 70kD (HSP70), peptide-binding domain"/>
    <property type="match status" value="1"/>
</dbReference>
<dbReference type="PROSITE" id="PS00297">
    <property type="entry name" value="HSP70_1"/>
    <property type="match status" value="1"/>
</dbReference>
<dbReference type="PROSITE" id="PS00329">
    <property type="entry name" value="HSP70_2"/>
    <property type="match status" value="1"/>
</dbReference>
<dbReference type="PROSITE" id="PS01036">
    <property type="entry name" value="HSP70_3"/>
    <property type="match status" value="1"/>
</dbReference>
<feature type="chain" id="PRO_1000119700" description="Chaperone protein DnaK">
    <location>
        <begin position="1"/>
        <end position="639"/>
    </location>
</feature>
<feature type="region of interest" description="Disordered" evidence="2">
    <location>
        <begin position="589"/>
        <end position="639"/>
    </location>
</feature>
<feature type="compositionally biased region" description="Low complexity" evidence="2">
    <location>
        <begin position="594"/>
        <end position="623"/>
    </location>
</feature>
<feature type="compositionally biased region" description="Acidic residues" evidence="2">
    <location>
        <begin position="628"/>
        <end position="639"/>
    </location>
</feature>
<feature type="modified residue" description="Phosphothreonine; by autocatalysis" evidence="1">
    <location>
        <position position="197"/>
    </location>
</feature>
<comment type="function">
    <text evidence="1">Acts as a chaperone.</text>
</comment>
<comment type="induction">
    <text evidence="1">By stress conditions e.g. heat shock.</text>
</comment>
<comment type="similarity">
    <text evidence="1">Belongs to the heat shock protein 70 family.</text>
</comment>
<reference key="1">
    <citation type="submission" date="2008-10" db="EMBL/GenBank/DDBJ databases">
        <title>Complete sequence of Desulfovibrio vulgaris str. 'Miyazaki F'.</title>
        <authorList>
            <person name="Lucas S."/>
            <person name="Copeland A."/>
            <person name="Lapidus A."/>
            <person name="Glavina del Rio T."/>
            <person name="Dalin E."/>
            <person name="Tice H."/>
            <person name="Bruce D."/>
            <person name="Goodwin L."/>
            <person name="Pitluck S."/>
            <person name="Sims D."/>
            <person name="Brettin T."/>
            <person name="Detter J.C."/>
            <person name="Han C."/>
            <person name="Larimer F."/>
            <person name="Land M."/>
            <person name="Hauser L."/>
            <person name="Kyrpides N."/>
            <person name="Mikhailova N."/>
            <person name="Hazen T.C."/>
            <person name="Richardson P."/>
        </authorList>
    </citation>
    <scope>NUCLEOTIDE SEQUENCE [LARGE SCALE GENOMIC DNA]</scope>
    <source>
        <strain>DSM 19637 / Miyazaki F</strain>
    </source>
</reference>
<proteinExistence type="inferred from homology"/>
<keyword id="KW-0067">ATP-binding</keyword>
<keyword id="KW-0143">Chaperone</keyword>
<keyword id="KW-0547">Nucleotide-binding</keyword>
<keyword id="KW-0597">Phosphoprotein</keyword>
<keyword id="KW-0346">Stress response</keyword>